<comment type="function">
    <text evidence="1">Required for nucleoid occlusion (NO) phenomenon, which prevents Z-ring formation and cell division over the nucleoid. Acts as a DNA-associated cell division inhibitor that binds simultaneously chromosomal DNA and FtsZ, and disrupts the assembly of FtsZ polymers. SlmA-DNA-binding sequences (SBS) are dispersed on non-Ter regions of the chromosome, preventing FtsZ polymerization at these regions.</text>
</comment>
<comment type="subunit">
    <text evidence="1">Homodimer. Interacts with FtsZ.</text>
</comment>
<comment type="subcellular location">
    <subcellularLocation>
        <location evidence="1">Cytoplasm</location>
        <location evidence="1">Nucleoid</location>
    </subcellularLocation>
</comment>
<comment type="similarity">
    <text evidence="1">Belongs to the nucleoid occlusion factor SlmA family.</text>
</comment>
<gene>
    <name evidence="1" type="primary">slmA</name>
    <name type="ordered locus">VS_0180</name>
</gene>
<dbReference type="EMBL" id="FM954972">
    <property type="protein sequence ID" value="CAV17212.1"/>
    <property type="molecule type" value="Genomic_DNA"/>
</dbReference>
<dbReference type="SMR" id="B7VHK0"/>
<dbReference type="STRING" id="575788.VS_0180"/>
<dbReference type="KEGG" id="vsp:VS_0180"/>
<dbReference type="eggNOG" id="COG1309">
    <property type="taxonomic scope" value="Bacteria"/>
</dbReference>
<dbReference type="HOGENOM" id="CLU_069356_5_0_6"/>
<dbReference type="Proteomes" id="UP000009100">
    <property type="component" value="Chromosome 1"/>
</dbReference>
<dbReference type="GO" id="GO:0043590">
    <property type="term" value="C:bacterial nucleoid"/>
    <property type="evidence" value="ECO:0007669"/>
    <property type="project" value="UniProtKB-UniRule"/>
</dbReference>
<dbReference type="GO" id="GO:0005737">
    <property type="term" value="C:cytoplasm"/>
    <property type="evidence" value="ECO:0007669"/>
    <property type="project" value="UniProtKB-UniRule"/>
</dbReference>
<dbReference type="GO" id="GO:0003700">
    <property type="term" value="F:DNA-binding transcription factor activity"/>
    <property type="evidence" value="ECO:0007669"/>
    <property type="project" value="TreeGrafter"/>
</dbReference>
<dbReference type="GO" id="GO:0000976">
    <property type="term" value="F:transcription cis-regulatory region binding"/>
    <property type="evidence" value="ECO:0007669"/>
    <property type="project" value="TreeGrafter"/>
</dbReference>
<dbReference type="GO" id="GO:0051301">
    <property type="term" value="P:cell division"/>
    <property type="evidence" value="ECO:0007669"/>
    <property type="project" value="UniProtKB-KW"/>
</dbReference>
<dbReference type="GO" id="GO:0010974">
    <property type="term" value="P:negative regulation of division septum assembly"/>
    <property type="evidence" value="ECO:0007669"/>
    <property type="project" value="InterPro"/>
</dbReference>
<dbReference type="FunFam" id="1.10.357.10:FF:000002">
    <property type="entry name" value="Nucleoid occlusion factor SlmA"/>
    <property type="match status" value="1"/>
</dbReference>
<dbReference type="Gene3D" id="1.10.357.10">
    <property type="entry name" value="Tetracycline Repressor, domain 2"/>
    <property type="match status" value="1"/>
</dbReference>
<dbReference type="HAMAP" id="MF_01839">
    <property type="entry name" value="NO_factor_SlmA"/>
    <property type="match status" value="1"/>
</dbReference>
<dbReference type="InterPro" id="IPR009057">
    <property type="entry name" value="Homeodomain-like_sf"/>
</dbReference>
<dbReference type="InterPro" id="IPR050109">
    <property type="entry name" value="HTH-type_TetR-like_transc_reg"/>
</dbReference>
<dbReference type="InterPro" id="IPR001647">
    <property type="entry name" value="HTH_TetR"/>
</dbReference>
<dbReference type="InterPro" id="IPR023769">
    <property type="entry name" value="NO_SlmA"/>
</dbReference>
<dbReference type="InterPro" id="IPR054580">
    <property type="entry name" value="SlmA-like_C"/>
</dbReference>
<dbReference type="InterPro" id="IPR036271">
    <property type="entry name" value="Tet_transcr_reg_TetR-rel_C_sf"/>
</dbReference>
<dbReference type="NCBIfam" id="NF007015">
    <property type="entry name" value="PRK09480.1"/>
    <property type="match status" value="1"/>
</dbReference>
<dbReference type="PANTHER" id="PTHR30055">
    <property type="entry name" value="HTH-TYPE TRANSCRIPTIONAL REGULATOR RUTR"/>
    <property type="match status" value="1"/>
</dbReference>
<dbReference type="PANTHER" id="PTHR30055:SF183">
    <property type="entry name" value="NUCLEOID OCCLUSION FACTOR SLMA"/>
    <property type="match status" value="1"/>
</dbReference>
<dbReference type="Pfam" id="PF22276">
    <property type="entry name" value="SlmA-like_C"/>
    <property type="match status" value="1"/>
</dbReference>
<dbReference type="Pfam" id="PF00440">
    <property type="entry name" value="TetR_N"/>
    <property type="match status" value="1"/>
</dbReference>
<dbReference type="SUPFAM" id="SSF46689">
    <property type="entry name" value="Homeodomain-like"/>
    <property type="match status" value="1"/>
</dbReference>
<dbReference type="SUPFAM" id="SSF48498">
    <property type="entry name" value="Tetracyclin repressor-like, C-terminal domain"/>
    <property type="match status" value="1"/>
</dbReference>
<dbReference type="PROSITE" id="PS50977">
    <property type="entry name" value="HTH_TETR_2"/>
    <property type="match status" value="1"/>
</dbReference>
<feature type="chain" id="PRO_1000188407" description="Nucleoid occlusion factor SlmA">
    <location>
        <begin position="1"/>
        <end position="196"/>
    </location>
</feature>
<feature type="domain" description="HTH tetR-type" evidence="1">
    <location>
        <begin position="7"/>
        <end position="68"/>
    </location>
</feature>
<feature type="DNA-binding region" description="H-T-H motif" evidence="1">
    <location>
        <begin position="31"/>
        <end position="50"/>
    </location>
</feature>
<feature type="coiled-coil region" evidence="1">
    <location>
        <begin position="65"/>
        <end position="142"/>
    </location>
</feature>
<reference key="1">
    <citation type="submission" date="2009-02" db="EMBL/GenBank/DDBJ databases">
        <title>Vibrio splendidus str. LGP32 complete genome.</title>
        <authorList>
            <person name="Mazel D."/>
            <person name="Le Roux F."/>
        </authorList>
    </citation>
    <scope>NUCLEOTIDE SEQUENCE [LARGE SCALE GENOMIC DNA]</scope>
    <source>
        <strain>LGP32</strain>
    </source>
</reference>
<protein>
    <recommendedName>
        <fullName evidence="1">Nucleoid occlusion factor SlmA</fullName>
    </recommendedName>
</protein>
<proteinExistence type="inferred from homology"/>
<keyword id="KW-0131">Cell cycle</keyword>
<keyword id="KW-0132">Cell division</keyword>
<keyword id="KW-0175">Coiled coil</keyword>
<keyword id="KW-0963">Cytoplasm</keyword>
<keyword id="KW-0238">DNA-binding</keyword>
<evidence type="ECO:0000255" key="1">
    <source>
        <dbReference type="HAMAP-Rule" id="MF_01839"/>
    </source>
</evidence>
<name>SLMA_VIBA3</name>
<accession>B7VHK0</accession>
<sequence length="196" mass="22807">MAGTRKSNRREEILQALAQMLESTEGASRITTVKLAKQVGVSEAALYRHFPSKARMFEGLIEFIEEALMSRINRILDEEKDTLERIRLVLQLILVFSERNPGLTRILSGHALMFENERLRDRINQLFERIETQLRQILRERKLREGKSFPVDEKILAAQLLGQVEGSLNRFVRSDFKYQPTENFDAYWALLSAQIK</sequence>
<organism>
    <name type="scientific">Vibrio atlanticus (strain LGP32)</name>
    <name type="common">Vibrio splendidus (strain Mel32)</name>
    <dbReference type="NCBI Taxonomy" id="575788"/>
    <lineage>
        <taxon>Bacteria</taxon>
        <taxon>Pseudomonadati</taxon>
        <taxon>Pseudomonadota</taxon>
        <taxon>Gammaproteobacteria</taxon>
        <taxon>Vibrionales</taxon>
        <taxon>Vibrionaceae</taxon>
        <taxon>Vibrio</taxon>
    </lineage>
</organism>